<feature type="chain" id="PRO_0000445799" description="Centrosomal protein Cep290" evidence="9">
    <location>
        <begin position="1"/>
        <end position="1978"/>
    </location>
</feature>
<feature type="region of interest" description="Necessary and sufficient for function in ciliogenesis, transition zone (TZ) assembly, and recruitment of DZP1 and Mks1 to the TZ. Also required for subcellular localization to the cilium basal body" evidence="8">
    <location>
        <begin position="1"/>
        <end position="650"/>
    </location>
</feature>
<feature type="region of interest" description="Disordered" evidence="2">
    <location>
        <begin position="271"/>
        <end position="296"/>
    </location>
</feature>
<feature type="region of interest" description="Disordered" evidence="2">
    <location>
        <begin position="663"/>
        <end position="688"/>
    </location>
</feature>
<feature type="region of interest" description="Disordered" evidence="2">
    <location>
        <begin position="1313"/>
        <end position="1397"/>
    </location>
</feature>
<feature type="region of interest" description="Disordered" evidence="2">
    <location>
        <begin position="1684"/>
        <end position="1714"/>
    </location>
</feature>
<feature type="region of interest" description="Disordered" evidence="2">
    <location>
        <begin position="1859"/>
        <end position="1884"/>
    </location>
</feature>
<feature type="coiled-coil region" evidence="1">
    <location>
        <begin position="76"/>
        <end position="384"/>
    </location>
</feature>
<feature type="coiled-coil region" evidence="1">
    <location>
        <begin position="471"/>
        <end position="505"/>
    </location>
</feature>
<feature type="coiled-coil region" evidence="1">
    <location>
        <begin position="853"/>
        <end position="887"/>
    </location>
</feature>
<feature type="coiled-coil region" evidence="1">
    <location>
        <begin position="922"/>
        <end position="970"/>
    </location>
</feature>
<feature type="coiled-coil region" evidence="1">
    <location>
        <begin position="1192"/>
        <end position="1233"/>
    </location>
</feature>
<feature type="coiled-coil region" evidence="1">
    <location>
        <begin position="1405"/>
        <end position="1439"/>
    </location>
</feature>
<feature type="coiled-coil region" evidence="1">
    <location>
        <begin position="1501"/>
        <end position="1654"/>
    </location>
</feature>
<feature type="coiled-coil region" evidence="1">
    <location>
        <begin position="1726"/>
        <end position="1935"/>
    </location>
</feature>
<feature type="compositionally biased region" description="Low complexity" evidence="2">
    <location>
        <begin position="276"/>
        <end position="290"/>
    </location>
</feature>
<feature type="compositionally biased region" description="Basic and acidic residues" evidence="2">
    <location>
        <begin position="1313"/>
        <end position="1324"/>
    </location>
</feature>
<feature type="compositionally biased region" description="Low complexity" evidence="2">
    <location>
        <begin position="1329"/>
        <end position="1341"/>
    </location>
</feature>
<feature type="compositionally biased region" description="Acidic residues" evidence="2">
    <location>
        <begin position="1379"/>
        <end position="1391"/>
    </location>
</feature>
<feature type="compositionally biased region" description="Polar residues" evidence="2">
    <location>
        <begin position="1693"/>
        <end position="1708"/>
    </location>
</feature>
<feature type="mutagenesis site" description="In CEP290-C; no effect on cilium basal body localization." evidence="8">
    <location>
        <begin position="1"/>
        <end position="1384"/>
    </location>
</feature>
<feature type="mutagenesis site" description="In CEP290-M; abolishes cilium basal body localization; when associated with 1385-G--E-1978." evidence="8">
    <location>
        <begin position="1"/>
        <end position="650"/>
    </location>
</feature>
<feature type="mutagenesis site" description="In CEP290-1; in olfactory and auditory neurons, transition zones (TZ) fail to form leading to the disassociation of the basal bodies from plasma membrane at later stages cliliogenesis, abnormal elongation of the axoneme and consequently complete loss of cilia. As a consequence, adults are uncoordinated and have severe defects in touch and hearing. In testes, flagellar axonemes are almost completely lost and sperm cyst elongation is severely defective. As a consequence, mature sperms do not develop and so males are completely infertile." evidence="8">
    <location>
        <begin position="157"/>
        <end position="1978"/>
    </location>
</feature>
<feature type="mutagenesis site" description="In CEP290-N; no effect on cilium basal body localization however expression in more restricted within the transition zone of auditory cilia. When overexpressed in CEP290-1 mutants, rescues defects in ciliogenesis, basal body docking, transition zone (TZ) assembly, and recruitment of DZP1 and Mks1 to the TZ. It does not rescue uncoordination." evidence="8">
    <location>
        <begin position="651"/>
        <end position="1978"/>
    </location>
</feature>
<feature type="mutagenesis site" description="In CEP290-N+M; no effect on cilium basal body localization. In CEP290-M; abolishes cilium basal body localization; when associated with 1-M--E-650." evidence="8">
    <location>
        <begin position="1385"/>
        <end position="1978"/>
    </location>
</feature>
<feature type="mutagenesis site" description="In olfactory and auditory neurons, transition zones (TZ) fail to form, ciliary axonemes are lost and DZIP1 expression is significantly reduced resulting in uncoordination and severe defects in touch and hearing. No effect on connection between the basal bodies and plasma membrane. Mild defects in spermatid development and male fertility. In spermatocyte cilia there is no significant reduction in DZIP1 expression." evidence="8">
    <location>
        <begin position="1386"/>
        <end position="1978"/>
    </location>
</feature>
<feature type="mutagenesis site" description="Results in motor defects including crossed legs and inability to stand or hold wings erect. In sensory neurons, results in failure to form a transition zone. In cilia, shows severe proprioception defects including defective mechanoreceptor current (MRC) but normal transepithelial potential (TEP). In germ cells, results in defective transition zone assembly and ciliary cap structure; the defects include increased distance between microtubules (MT) and between MT and membrane and it is associated with longer cilium basal body. This leads to ultrastructural axoneme defects without compromising the attachment of spermatocyte centrioles to the membrane." evidence="3 6">
    <location>
        <begin position="1472"/>
        <end position="1978"/>
    </location>
</feature>
<feature type="sequence conflict" description="In Ref. 3; AAM12244." evidence="9" ref="3">
    <original>L</original>
    <variation>M</variation>
    <location>
        <position position="79"/>
    </location>
</feature>
<feature type="sequence conflict" description="In Ref. 3; AAM12244." evidence="9" ref="3">
    <original>A</original>
    <variation>V</variation>
    <location>
        <position position="340"/>
    </location>
</feature>
<feature type="sequence conflict" description="In Ref. 3; AAM12244." evidence="9" ref="3">
    <original>A</original>
    <variation>G</variation>
    <location>
        <position position="649"/>
    </location>
</feature>
<feature type="sequence conflict" description="In Ref. 3; AAM12244." evidence="9" ref="3">
    <original>P</original>
    <variation>H</variation>
    <location>
        <position position="829"/>
    </location>
</feature>
<feature type="sequence conflict" description="In Ref. 3; AAM12244." evidence="9" ref="3">
    <original>E</original>
    <variation>G</variation>
    <location>
        <position position="942"/>
    </location>
</feature>
<feature type="sequence conflict" description="In Ref. 3; AAM12244." evidence="9" ref="3">
    <original>I</original>
    <variation>V</variation>
    <location>
        <position position="1035"/>
    </location>
</feature>
<keyword id="KW-0966">Cell projection</keyword>
<keyword id="KW-0969">Cilium</keyword>
<keyword id="KW-0970">Cilium biogenesis/degradation</keyword>
<keyword id="KW-0175">Coiled coil</keyword>
<keyword id="KW-0963">Cytoplasm</keyword>
<keyword id="KW-0206">Cytoskeleton</keyword>
<keyword id="KW-1185">Reference proteome</keyword>
<protein>
    <recommendedName>
        <fullName evidence="11">Centrosomal protein Cep290</fullName>
    </recommendedName>
</protein>
<gene>
    <name evidence="11" type="primary">Cep290</name>
    <name evidence="11" type="ORF">CG13889</name>
</gene>
<name>CE290_DROME</name>
<dbReference type="EMBL" id="AE014296">
    <property type="protein sequence ID" value="AAF47422.2"/>
    <property type="molecule type" value="Genomic_DNA"/>
</dbReference>
<dbReference type="EMBL" id="AE014296">
    <property type="protein sequence ID" value="AGB93922.1"/>
    <property type="molecule type" value="Genomic_DNA"/>
</dbReference>
<dbReference type="EMBL" id="AY095510">
    <property type="protein sequence ID" value="AAM12244.1"/>
    <property type="molecule type" value="mRNA"/>
</dbReference>
<dbReference type="RefSeq" id="NP_001261227.1">
    <property type="nucleotide sequence ID" value="NM_001274298.1"/>
</dbReference>
<dbReference type="RefSeq" id="NP_612064.1">
    <property type="nucleotide sequence ID" value="NM_138220.1"/>
</dbReference>
<dbReference type="SMR" id="Q9W0M1"/>
<dbReference type="ComplexPortal" id="CPX-2789">
    <property type="entry name" value="CEP290 complex"/>
</dbReference>
<dbReference type="FunCoup" id="Q9W0M1">
    <property type="interactions" value="65"/>
</dbReference>
<dbReference type="IntAct" id="Q9W0M1">
    <property type="interactions" value="6"/>
</dbReference>
<dbReference type="STRING" id="7227.FBpp0304992"/>
<dbReference type="PaxDb" id="7227-FBpp0304992"/>
<dbReference type="EnsemblMetazoa" id="FBtr0072586">
    <property type="protein sequence ID" value="FBpp0072483"/>
    <property type="gene ID" value="FBgn0035168"/>
</dbReference>
<dbReference type="EnsemblMetazoa" id="FBtr0332752">
    <property type="protein sequence ID" value="FBpp0304992"/>
    <property type="gene ID" value="FBgn0035168"/>
</dbReference>
<dbReference type="GeneID" id="38099"/>
<dbReference type="KEGG" id="dme:Dmel_CG13889"/>
<dbReference type="UCSC" id="CG13889-RA">
    <property type="organism name" value="d. melanogaster"/>
</dbReference>
<dbReference type="AGR" id="FB:FBgn0035168"/>
<dbReference type="CTD" id="80184"/>
<dbReference type="FlyBase" id="FBgn0035168">
    <property type="gene designation" value="Cep290"/>
</dbReference>
<dbReference type="VEuPathDB" id="VectorBase:FBgn0035168"/>
<dbReference type="eggNOG" id="ENOG502QPTZ">
    <property type="taxonomic scope" value="Eukaryota"/>
</dbReference>
<dbReference type="HOGENOM" id="CLU_235006_0_0_1"/>
<dbReference type="InParanoid" id="Q9W0M1"/>
<dbReference type="OMA" id="RIEMQQR"/>
<dbReference type="OrthoDB" id="6351660at2759"/>
<dbReference type="PhylomeDB" id="Q9W0M1"/>
<dbReference type="Reactome" id="R-DME-6798695">
    <property type="pathway name" value="Neutrophil degranulation"/>
</dbReference>
<dbReference type="SignaLink" id="Q9W0M1"/>
<dbReference type="BioGRID-ORCS" id="38099">
    <property type="hits" value="0 hits in 1 CRISPR screen"/>
</dbReference>
<dbReference type="GenomeRNAi" id="38099"/>
<dbReference type="PRO" id="PR:Q9W0M1"/>
<dbReference type="Proteomes" id="UP000000803">
    <property type="component" value="Chromosome 3L"/>
</dbReference>
<dbReference type="Bgee" id="FBgn0035168">
    <property type="expression patterns" value="Expressed in Johnston organ neuron (Drosophila) in antenna and 15 other cell types or tissues"/>
</dbReference>
<dbReference type="GO" id="GO:0034451">
    <property type="term" value="C:centriolar satellite"/>
    <property type="evidence" value="ECO:0000318"/>
    <property type="project" value="GO_Central"/>
</dbReference>
<dbReference type="GO" id="GO:0005814">
    <property type="term" value="C:centriole"/>
    <property type="evidence" value="ECO:0007669"/>
    <property type="project" value="UniProtKB-SubCell"/>
</dbReference>
<dbReference type="GO" id="GO:0036064">
    <property type="term" value="C:ciliary basal body"/>
    <property type="evidence" value="ECO:0000314"/>
    <property type="project" value="UniProtKB"/>
</dbReference>
<dbReference type="GO" id="GO:0061822">
    <property type="term" value="C:ciliary cap"/>
    <property type="evidence" value="ECO:0000314"/>
    <property type="project" value="FlyBase"/>
</dbReference>
<dbReference type="GO" id="GO:0035869">
    <property type="term" value="C:ciliary transition zone"/>
    <property type="evidence" value="ECO:0000314"/>
    <property type="project" value="UniProtKB"/>
</dbReference>
<dbReference type="GO" id="GO:0005737">
    <property type="term" value="C:cytoplasm"/>
    <property type="evidence" value="ECO:0007669"/>
    <property type="project" value="UniProtKB-KW"/>
</dbReference>
<dbReference type="GO" id="GO:0097711">
    <property type="term" value="P:ciliary basal body-plasma membrane docking"/>
    <property type="evidence" value="ECO:0000315"/>
    <property type="project" value="UniProtKB"/>
</dbReference>
<dbReference type="GO" id="GO:1905349">
    <property type="term" value="P:ciliary transition zone assembly"/>
    <property type="evidence" value="ECO:0000315"/>
    <property type="project" value="UniProtKB"/>
</dbReference>
<dbReference type="GO" id="GO:0060271">
    <property type="term" value="P:cilium assembly"/>
    <property type="evidence" value="ECO:0000315"/>
    <property type="project" value="FlyBase"/>
</dbReference>
<dbReference type="GO" id="GO:0061824">
    <property type="term" value="P:cytosolic ciliogenesis"/>
    <property type="evidence" value="ECO:0000314"/>
    <property type="project" value="FlyBase"/>
</dbReference>
<dbReference type="GO" id="GO:1905515">
    <property type="term" value="P:non-motile cilium assembly"/>
    <property type="evidence" value="ECO:0000315"/>
    <property type="project" value="FlyBase"/>
</dbReference>
<dbReference type="InterPro" id="IPR026201">
    <property type="entry name" value="Cep290"/>
</dbReference>
<dbReference type="PANTHER" id="PTHR18879">
    <property type="entry name" value="CENTROSOMAL PROTEIN OF 290 KDA"/>
    <property type="match status" value="1"/>
</dbReference>
<dbReference type="PANTHER" id="PTHR18879:SF20">
    <property type="entry name" value="CENTROSOMAL PROTEIN OF 290 KDA"/>
    <property type="match status" value="1"/>
</dbReference>
<comment type="function">
    <text evidence="3 6 7 8">Essential for ciliogenesis in sensory neurons and spermatocytes (PubMed:25447994, PubMed:30013109, PubMed:31821146, PubMed:33370260). During neuron and spermatocyte ciliogenesis, essential for initiating transition zone (TZ) assembly and is required for the formation of diverse connections between microtubules and between microtubules and the membrane (PubMed:25447994, PubMed:30013109, PubMed:31821146, PubMed:33370260). Regulates TZ assembly by recruiting DZIP1 to the plasma membrane where it promotes early ciliary membrane formation resulting in the initiation of TZ assembly (PubMed:31821146, PubMed:33370260).</text>
</comment>
<comment type="subunit">
    <text evidence="8">Interacts (via N-terminus) with DZIP1.</text>
</comment>
<comment type="interaction">
    <interactant intactId="EBI-92679">
        <id>Q9W0M1</id>
    </interactant>
    <interactant intactId="EBI-134631">
        <id>Q9VC70</id>
        <label>DZIP1</label>
    </interactant>
    <organismsDiffer>false</organismsDiffer>
    <experiments>3</experiments>
</comment>
<comment type="subcellular location">
    <subcellularLocation>
        <location evidence="3 4 5 6 8">Cytoplasm</location>
        <location evidence="3 4 5 6 8">Cytoskeleton</location>
        <location evidence="3 4 5 6 8">Cilium basal body</location>
    </subcellularLocation>
    <subcellularLocation>
        <location evidence="3">Cytoplasm</location>
        <location evidence="3">Cytoskeleton</location>
        <location evidence="3">Microtubule organizing center</location>
        <location evidence="3">Centrosome</location>
        <location evidence="3">Centriole</location>
    </subcellularLocation>
    <text evidence="3 4 5 6 8">Localizes at the transition zone (TZ), a region between the basal body and the ciliary axoneme in the olfactory, auditory and spermatocyte system (PubMed:30013109, PubMed:33370260). In sensory neurons, localizes to the transition zone at the tip of the mother centriole (PubMed:25447994). In germ cells, component of the spermatocyte primary cilium and spermatid ciliary cap (PubMed:25447994, PubMed:27577095, PubMed:27646273).</text>
</comment>
<comment type="tissue specificity">
    <text evidence="3 4 5 6">Expressed in sensory neurons type I and in germ cells (at protein level).</text>
</comment>
<comment type="domain">
    <text evidence="6">The C-terminus orients towards the microtubules and the N-terminus orients towards the membrane in a 9-fold symmetric manner.</text>
</comment>
<comment type="disruption phenotype">
    <text evidence="6 7">Adults are severely uncoordinated and exhibit disorganized spermatid cysts with dispersed nuclei, likely as a consequence of the severe defects in axonemal elongation (PubMed:31821146). RNAi-mediated knockdown in developing sensory neurons results in defective microtubule (MT)-microtubule (MT) and microtubule-membrane connections (Y linkers) ultimately affecting cilia formation leading to olfactory and gravitaxis behavioral defects (PubMed:30013109). RNAi-mediated knockdown in spermatocytes results in defective transition zone assembly including increased distance between microtubules (MT) and MT-membrane causing defective cilia (PubMed:30013109).</text>
</comment>
<organism evidence="12">
    <name type="scientific">Drosophila melanogaster</name>
    <name type="common">Fruit fly</name>
    <dbReference type="NCBI Taxonomy" id="7227"/>
    <lineage>
        <taxon>Eukaryota</taxon>
        <taxon>Metazoa</taxon>
        <taxon>Ecdysozoa</taxon>
        <taxon>Arthropoda</taxon>
        <taxon>Hexapoda</taxon>
        <taxon>Insecta</taxon>
        <taxon>Pterygota</taxon>
        <taxon>Neoptera</taxon>
        <taxon>Endopterygota</taxon>
        <taxon>Diptera</taxon>
        <taxon>Brachycera</taxon>
        <taxon>Muscomorpha</taxon>
        <taxon>Ephydroidea</taxon>
        <taxon>Drosophilidae</taxon>
        <taxon>Drosophila</taxon>
        <taxon>Sophophora</taxon>
    </lineage>
</organism>
<accession>Q9W0M1</accession>
<accession>Q8T3H8</accession>
<evidence type="ECO:0000255" key="1"/>
<evidence type="ECO:0000256" key="2">
    <source>
        <dbReference type="SAM" id="MobiDB-lite"/>
    </source>
</evidence>
<evidence type="ECO:0000269" key="3">
    <source>
    </source>
</evidence>
<evidence type="ECO:0000269" key="4">
    <source>
    </source>
</evidence>
<evidence type="ECO:0000269" key="5">
    <source>
    </source>
</evidence>
<evidence type="ECO:0000269" key="6">
    <source>
    </source>
</evidence>
<evidence type="ECO:0000269" key="7">
    <source>
    </source>
</evidence>
<evidence type="ECO:0000269" key="8">
    <source>
    </source>
</evidence>
<evidence type="ECO:0000305" key="9"/>
<evidence type="ECO:0000312" key="10">
    <source>
        <dbReference type="EMBL" id="AAM12244.1"/>
    </source>
</evidence>
<evidence type="ECO:0000312" key="11">
    <source>
        <dbReference type="FlyBase" id="FBgn0035168"/>
    </source>
</evidence>
<evidence type="ECO:0000312" key="12">
    <source>
        <dbReference type="Proteomes" id="UP000000803"/>
    </source>
</evidence>
<reference evidence="12" key="1">
    <citation type="journal article" date="2000" name="Science">
        <title>The genome sequence of Drosophila melanogaster.</title>
        <authorList>
            <person name="Adams M.D."/>
            <person name="Celniker S.E."/>
            <person name="Holt R.A."/>
            <person name="Evans C.A."/>
            <person name="Gocayne J.D."/>
            <person name="Amanatides P.G."/>
            <person name="Scherer S.E."/>
            <person name="Li P.W."/>
            <person name="Hoskins R.A."/>
            <person name="Galle R.F."/>
            <person name="George R.A."/>
            <person name="Lewis S.E."/>
            <person name="Richards S."/>
            <person name="Ashburner M."/>
            <person name="Henderson S.N."/>
            <person name="Sutton G.G."/>
            <person name="Wortman J.R."/>
            <person name="Yandell M.D."/>
            <person name="Zhang Q."/>
            <person name="Chen L.X."/>
            <person name="Brandon R.C."/>
            <person name="Rogers Y.-H.C."/>
            <person name="Blazej R.G."/>
            <person name="Champe M."/>
            <person name="Pfeiffer B.D."/>
            <person name="Wan K.H."/>
            <person name="Doyle C."/>
            <person name="Baxter E.G."/>
            <person name="Helt G."/>
            <person name="Nelson C.R."/>
            <person name="Miklos G.L.G."/>
            <person name="Abril J.F."/>
            <person name="Agbayani A."/>
            <person name="An H.-J."/>
            <person name="Andrews-Pfannkoch C."/>
            <person name="Baldwin D."/>
            <person name="Ballew R.M."/>
            <person name="Basu A."/>
            <person name="Baxendale J."/>
            <person name="Bayraktaroglu L."/>
            <person name="Beasley E.M."/>
            <person name="Beeson K.Y."/>
            <person name="Benos P.V."/>
            <person name="Berman B.P."/>
            <person name="Bhandari D."/>
            <person name="Bolshakov S."/>
            <person name="Borkova D."/>
            <person name="Botchan M.R."/>
            <person name="Bouck J."/>
            <person name="Brokstein P."/>
            <person name="Brottier P."/>
            <person name="Burtis K.C."/>
            <person name="Busam D.A."/>
            <person name="Butler H."/>
            <person name="Cadieu E."/>
            <person name="Center A."/>
            <person name="Chandra I."/>
            <person name="Cherry J.M."/>
            <person name="Cawley S."/>
            <person name="Dahlke C."/>
            <person name="Davenport L.B."/>
            <person name="Davies P."/>
            <person name="de Pablos B."/>
            <person name="Delcher A."/>
            <person name="Deng Z."/>
            <person name="Mays A.D."/>
            <person name="Dew I."/>
            <person name="Dietz S.M."/>
            <person name="Dodson K."/>
            <person name="Doup L.E."/>
            <person name="Downes M."/>
            <person name="Dugan-Rocha S."/>
            <person name="Dunkov B.C."/>
            <person name="Dunn P."/>
            <person name="Durbin K.J."/>
            <person name="Evangelista C.C."/>
            <person name="Ferraz C."/>
            <person name="Ferriera S."/>
            <person name="Fleischmann W."/>
            <person name="Fosler C."/>
            <person name="Gabrielian A.E."/>
            <person name="Garg N.S."/>
            <person name="Gelbart W.M."/>
            <person name="Glasser K."/>
            <person name="Glodek A."/>
            <person name="Gong F."/>
            <person name="Gorrell J.H."/>
            <person name="Gu Z."/>
            <person name="Guan P."/>
            <person name="Harris M."/>
            <person name="Harris N.L."/>
            <person name="Harvey D.A."/>
            <person name="Heiman T.J."/>
            <person name="Hernandez J.R."/>
            <person name="Houck J."/>
            <person name="Hostin D."/>
            <person name="Houston K.A."/>
            <person name="Howland T.J."/>
            <person name="Wei M.-H."/>
            <person name="Ibegwam C."/>
            <person name="Jalali M."/>
            <person name="Kalush F."/>
            <person name="Karpen G.H."/>
            <person name="Ke Z."/>
            <person name="Kennison J.A."/>
            <person name="Ketchum K.A."/>
            <person name="Kimmel B.E."/>
            <person name="Kodira C.D."/>
            <person name="Kraft C.L."/>
            <person name="Kravitz S."/>
            <person name="Kulp D."/>
            <person name="Lai Z."/>
            <person name="Lasko P."/>
            <person name="Lei Y."/>
            <person name="Levitsky A.A."/>
            <person name="Li J.H."/>
            <person name="Li Z."/>
            <person name="Liang Y."/>
            <person name="Lin X."/>
            <person name="Liu X."/>
            <person name="Mattei B."/>
            <person name="McIntosh T.C."/>
            <person name="McLeod M.P."/>
            <person name="McPherson D."/>
            <person name="Merkulov G."/>
            <person name="Milshina N.V."/>
            <person name="Mobarry C."/>
            <person name="Morris J."/>
            <person name="Moshrefi A."/>
            <person name="Mount S.M."/>
            <person name="Moy M."/>
            <person name="Murphy B."/>
            <person name="Murphy L."/>
            <person name="Muzny D.M."/>
            <person name="Nelson D.L."/>
            <person name="Nelson D.R."/>
            <person name="Nelson K.A."/>
            <person name="Nixon K."/>
            <person name="Nusskern D.R."/>
            <person name="Pacleb J.M."/>
            <person name="Palazzolo M."/>
            <person name="Pittman G.S."/>
            <person name="Pan S."/>
            <person name="Pollard J."/>
            <person name="Puri V."/>
            <person name="Reese M.G."/>
            <person name="Reinert K."/>
            <person name="Remington K."/>
            <person name="Saunders R.D.C."/>
            <person name="Scheeler F."/>
            <person name="Shen H."/>
            <person name="Shue B.C."/>
            <person name="Siden-Kiamos I."/>
            <person name="Simpson M."/>
            <person name="Skupski M.P."/>
            <person name="Smith T.J."/>
            <person name="Spier E."/>
            <person name="Spradling A.C."/>
            <person name="Stapleton M."/>
            <person name="Strong R."/>
            <person name="Sun E."/>
            <person name="Svirskas R."/>
            <person name="Tector C."/>
            <person name="Turner R."/>
            <person name="Venter E."/>
            <person name="Wang A.H."/>
            <person name="Wang X."/>
            <person name="Wang Z.-Y."/>
            <person name="Wassarman D.A."/>
            <person name="Weinstock G.M."/>
            <person name="Weissenbach J."/>
            <person name="Williams S.M."/>
            <person name="Woodage T."/>
            <person name="Worley K.C."/>
            <person name="Wu D."/>
            <person name="Yang S."/>
            <person name="Yao Q.A."/>
            <person name="Ye J."/>
            <person name="Yeh R.-F."/>
            <person name="Zaveri J.S."/>
            <person name="Zhan M."/>
            <person name="Zhang G."/>
            <person name="Zhao Q."/>
            <person name="Zheng L."/>
            <person name="Zheng X.H."/>
            <person name="Zhong F.N."/>
            <person name="Zhong W."/>
            <person name="Zhou X."/>
            <person name="Zhu S.C."/>
            <person name="Zhu X."/>
            <person name="Smith H.O."/>
            <person name="Gibbs R.A."/>
            <person name="Myers E.W."/>
            <person name="Rubin G.M."/>
            <person name="Venter J.C."/>
        </authorList>
    </citation>
    <scope>NUCLEOTIDE SEQUENCE [LARGE SCALE GENOMIC DNA]</scope>
    <source>
        <strain evidence="12">Berkeley</strain>
    </source>
</reference>
<reference evidence="12" key="2">
    <citation type="journal article" date="2002" name="Genome Biol.">
        <title>Annotation of the Drosophila melanogaster euchromatic genome: a systematic review.</title>
        <authorList>
            <person name="Misra S."/>
            <person name="Crosby M.A."/>
            <person name="Mungall C.J."/>
            <person name="Matthews B.B."/>
            <person name="Campbell K.S."/>
            <person name="Hradecky P."/>
            <person name="Huang Y."/>
            <person name="Kaminker J.S."/>
            <person name="Millburn G.H."/>
            <person name="Prochnik S.E."/>
            <person name="Smith C.D."/>
            <person name="Tupy J.L."/>
            <person name="Whitfield E.J."/>
            <person name="Bayraktaroglu L."/>
            <person name="Berman B.P."/>
            <person name="Bettencourt B.R."/>
            <person name="Celniker S.E."/>
            <person name="de Grey A.D.N.J."/>
            <person name="Drysdale R.A."/>
            <person name="Harris N.L."/>
            <person name="Richter J."/>
            <person name="Russo S."/>
            <person name="Schroeder A.J."/>
            <person name="Shu S.Q."/>
            <person name="Stapleton M."/>
            <person name="Yamada C."/>
            <person name="Ashburner M."/>
            <person name="Gelbart W.M."/>
            <person name="Rubin G.M."/>
            <person name="Lewis S.E."/>
        </authorList>
    </citation>
    <scope>GENOME REANNOTATION</scope>
    <source>
        <strain evidence="12">Berkeley</strain>
    </source>
</reference>
<reference evidence="10" key="3">
    <citation type="journal article" date="2002" name="Genome Biol.">
        <title>A Drosophila full-length cDNA resource.</title>
        <authorList>
            <person name="Stapleton M."/>
            <person name="Carlson J.W."/>
            <person name="Brokstein P."/>
            <person name="Yu C."/>
            <person name="Champe M."/>
            <person name="George R.A."/>
            <person name="Guarin H."/>
            <person name="Kronmiller B."/>
            <person name="Pacleb J.M."/>
            <person name="Park S."/>
            <person name="Wan K.H."/>
            <person name="Rubin G.M."/>
            <person name="Celniker S.E."/>
        </authorList>
    </citation>
    <scope>NUCLEOTIDE SEQUENCE [LARGE SCALE MRNA] OF 1-1045</scope>
    <source>
        <strain evidence="10">Berkeley</strain>
        <tissue evidence="10">Testis</tissue>
    </source>
</reference>
<reference evidence="9" key="4">
    <citation type="journal article" date="2014" name="Curr. Biol.">
        <title>A migrating ciliary gate compartmentalizes the site of axoneme assembly in Drosophila spermatids.</title>
        <authorList>
            <person name="Basiri M.L."/>
            <person name="Ha A."/>
            <person name="Chadha A."/>
            <person name="Clark N.M."/>
            <person name="Polyanovsky A."/>
            <person name="Cook B."/>
            <person name="Avidor-Reiss T."/>
        </authorList>
    </citation>
    <scope>FUNCTION</scope>
    <scope>SUBCELLULAR LOCATION</scope>
    <scope>TISSUE SPECIFICITY</scope>
    <scope>MUTAGENESIS OF 1472-LEU--GLU-1978</scope>
</reference>
<reference evidence="9" key="5">
    <citation type="journal article" date="2016" name="J. Cell Biol.">
        <title>Transition zone assembly and its contribution to axoneme formation in Drosophila male germ cells.</title>
        <authorList>
            <person name="Vieillard J."/>
            <person name="Paschaki M."/>
            <person name="Duteyrat J.L."/>
            <person name="Augiere C."/>
            <person name="Cortier E."/>
            <person name="Lapart J.A."/>
            <person name="Thomas J."/>
            <person name="Durand B."/>
        </authorList>
    </citation>
    <scope>SUBCELLULAR LOCATION</scope>
    <scope>TISSUE SPECIFICITY</scope>
    <scope>MUTAGENESIS OF 1472-LEU--GLU-1978</scope>
</reference>
<reference evidence="9" key="6">
    <citation type="journal article" date="2016" name="J. Cell Sci.">
        <title>Drosophila sensory cilia lacking MKS proteins exhibit striking defects in development but only subtle defects in adults.</title>
        <authorList>
            <person name="Pratt M.B."/>
            <person name="Titlow J.S."/>
            <person name="Davis I."/>
            <person name="Barker A.R."/>
            <person name="Dawe H.R."/>
            <person name="Raff J.W."/>
            <person name="Roque H."/>
        </authorList>
    </citation>
    <scope>SUBCELLULAR LOCATION</scope>
    <scope>TISSUE SPECIFICITY</scope>
</reference>
<reference evidence="9" key="7">
    <citation type="journal article" date="2018" name="Nat. Cell Biol.">
        <title>Differential regulation of transition zone and centriole proteins contributes to ciliary base diversity.</title>
        <authorList>
            <person name="Jana S.C."/>
            <person name="Mendonca S."/>
            <person name="Machado P."/>
            <person name="Werner S."/>
            <person name="Rocha J."/>
            <person name="Pereira A."/>
            <person name="Maiato H."/>
            <person name="Bettencourt-Dias M."/>
        </authorList>
    </citation>
    <scope>FUNCTION</scope>
    <scope>SUBCELLULAR LOCATION</scope>
    <scope>TISSUE SPECIFICITY</scope>
    <scope>DOMAIN</scope>
    <scope>DISRUPTION PHENOTYPE</scope>
    <scope>MUTAGENESIS OF 1472-LEU--GLU-1978</scope>
</reference>
<reference key="8">
    <citation type="journal article" date="2019" name="Elife">
        <title>Dzip1 and Fam92 form a ciliary transition zone complex with cell type specific roles in Drosophila.</title>
        <authorList>
            <person name="Lapart J.A."/>
            <person name="Gottardo M."/>
            <person name="Cortier E."/>
            <person name="Duteyrat J.L."/>
            <person name="Augiere C."/>
            <person name="Mange A."/>
            <person name="Jerber J."/>
            <person name="Solassol J."/>
            <person name="Gopalakrishnan J."/>
            <person name="Thomas J."/>
            <person name="Durand B."/>
        </authorList>
    </citation>
    <scope>FUNCTION</scope>
    <scope>DISRUPTION PHENOTYPE</scope>
</reference>
<reference key="9">
    <citation type="journal article" date="2020" name="PLoS Biol.">
        <title>CEP290 is essential for the initiation of ciliary transition zone assembly.</title>
        <authorList>
            <person name="Wu Z."/>
            <person name="Pang N."/>
            <person name="Zhang Y."/>
            <person name="Chen H."/>
            <person name="Peng Y."/>
            <person name="Fu J."/>
            <person name="Wei Q."/>
        </authorList>
    </citation>
    <scope>FUNCTION</scope>
    <scope>INTERACTION WITH DZIP1</scope>
    <scope>SUBCELLULAR LOCATION</scope>
    <scope>MUTAGENESIS OF 1-MET--GLU-650; 1-MET--GLU-1384; 157-LYS--GLU-1978; 651-GLU--GLU-1978; 1385-GLY--GLU-1978 AND 1386-GLU--GLU-1978</scope>
</reference>
<sequence>MSMDIPETVSLRKFRDFSARQKQELYETLLELAESIDELPKKSLRKTLELTLAVLEYKGEQVQQLQESAAGGLSSDRRLQDENEKLKRMLQKLEDERDGLKSKAKELGEEIRQLELRLQEAAQQAEISDKDSSDPLSELDKQEQLLQNIDSKNKHIKRLLKEIETLQNQNIAQSKTIVLHERELQTIKANLVQLSQDITKVEQERKSLKQKEQQQALEITRLEGNLTFLEVEREKQEVEMRQFLDKYEAKSLGWRQALDDRDKEVERLKKQLEGKSISSGQTNSSNSQSQQEEEHAKLRQLLESREQRIEKLEEKIKSMAEEMVSSTRAMNQLCQEKERAHDPEQPRACCQMIEERLREATARCQQLSEMLEAAEQDNVLKSQQALHAISALEAYKRDEDGLIPALRRCSGLEQKVAARDKQLRAYIQELNSLHEVVQENELLRRKLHIPDDVVIMAKNVHSKQRNKDKQIERLTLKLRTSEELRLQLKLEKSELRRKLLELQQDSPQTLNESLQAPSEVGEVPHSVHLENSPRRGQGDGAASSEMQNRYDEVLAENETLRSGMYEILEKLREYDATSEHITIDSDLLRRLIEALPGGTTTPQRLQGQLLELKAREEALRQLLEQQNYSDSETGELSSVHSLCEVPEIAEEHPVEEDAVLNTATRPSSPTEATMGLRRPTVPDPEEKPTNEALAELSILRKHYDELRLHMSADGSDLMNRNQELHDQMIALELQLEQQRNSYSYMRRDYDQLLTETRKQELRFIDDKASLARQLEHSKSELCEAREELEQVNRRNLYTAEEQQKLEHRNAILSMQLGQAMEQLLGELKPTEICAEYGIIRENYQLDYITAQDFEEQQQELLTWRSKQAELQRETKQLEGLLHVANEQIHSQQRLLNEITDNHINLRHLVADLQSSSDEKLMLAKVQRDLDSVKAECSRLETEREKLQLKADCLQTQLEASELSLKQTQQDFQQERTNSDIKHKFLQHSLFMLKDKYAKFTPLVFLTNFVFAYQKFQRRLEEEQVQQRHRDHTALIDEVTAVVQAKIGLNEESSQQLVKLIKSETQTRLLEQRCEILQAKQEELVRELGELRMSQATDTEHWSTIQALFGEGEPRSQLKVDAETNTDAVAPNLAMRRAVQLIDRESSPIGSPLRKHPHLDTATQTLEAQVEFSETAVQTNGILSQQNQAVQTADAVEDNRRDSRAELQKMQETLQEANQRIEILGKQLEASRSESRESASPQGGVVEKTILSFHTLLLEKDQSIQKYQDLLQTERDQSQQALSKQVAENESLRATVNNLNFNIKTKDAEIQGLKEKLRQKPEVPVERNPSTDSRSSSSSDSSVNELTDEKIEELFESSSVERPPQEELEVPVEAGPENIVTEEPEGEEEKQDTEELKEVPTLHKQIKDLKDKLEYSERSLKTREEEVDILKEKLKLCQEREKSVESTVNPELDQLRIFLDEKDKHIKDLMDTLKNFHDDQQRYIKDTSNFSEDQIAKLAADLNRTEATNKIYHTQMEALRRQLANVTQREKQARDLSQSLRQQLLKRPVVSIKTELNARVKNENQLKRIQQLELDLDEARGQLQRQQTLLEAKRTRSANEVQLWEKQKRYQQQAEKTKARLEETELALEKTRALLQAARTTIARLEKDKQILESKLGRNGPPSNSSGGNNLKCCRTPSCPNLQHVGVSKFAPSPSESPETYTGPSSECSSPAHHHTQIFDQSQLDLIEALKSRIELQQRKIIAMELEGRGSNALTTELEKLQERCQAIEAQNIRLEARNLQLQLDSDLLRQGDSSDRLQKRIKHLEDYIMALKEEMARNESRRELGSGLKVSTNQGQSAEQTILSLRNLVEKLRSENKFLKDGRRSTESRSSMDSTPAEAARLQQQHAEALEKISALQQELQKRTTKCSQCGGRSKDAANEELKFIKEQLVKKTQLLQKAKVLLTRAAAKEKVLREQLALWKRKCSELQNVPVIDEISE</sequence>
<proteinExistence type="evidence at protein level"/>